<dbReference type="EMBL" id="AE014075">
    <property type="protein sequence ID" value="AAN79807.1"/>
    <property type="molecule type" value="Genomic_DNA"/>
</dbReference>
<dbReference type="RefSeq" id="WP_000877109.1">
    <property type="nucleotide sequence ID" value="NZ_CP051263.1"/>
</dbReference>
<dbReference type="SMR" id="Q8FIR0"/>
<dbReference type="STRING" id="199310.c1334"/>
<dbReference type="KEGG" id="ecc:c1334"/>
<dbReference type="eggNOG" id="COG3132">
    <property type="taxonomic scope" value="Bacteria"/>
</dbReference>
<dbReference type="HOGENOM" id="CLU_057831_2_0_6"/>
<dbReference type="BioCyc" id="ECOL199310:C1334-MONOMER"/>
<dbReference type="Proteomes" id="UP000001410">
    <property type="component" value="Chromosome"/>
</dbReference>
<dbReference type="FunFam" id="1.10.10.10:FF:000196">
    <property type="entry name" value="UPF0502 protein YceH"/>
    <property type="match status" value="1"/>
</dbReference>
<dbReference type="FunFam" id="1.10.10.10:FF:000241">
    <property type="entry name" value="UPF0502 protein YceH"/>
    <property type="match status" value="1"/>
</dbReference>
<dbReference type="Gene3D" id="1.10.10.10">
    <property type="entry name" value="Winged helix-like DNA-binding domain superfamily/Winged helix DNA-binding domain"/>
    <property type="match status" value="2"/>
</dbReference>
<dbReference type="HAMAP" id="MF_01584">
    <property type="entry name" value="UPF0502"/>
    <property type="match status" value="1"/>
</dbReference>
<dbReference type="InterPro" id="IPR007432">
    <property type="entry name" value="DUF480"/>
</dbReference>
<dbReference type="InterPro" id="IPR036388">
    <property type="entry name" value="WH-like_DNA-bd_sf"/>
</dbReference>
<dbReference type="InterPro" id="IPR036390">
    <property type="entry name" value="WH_DNA-bd_sf"/>
</dbReference>
<dbReference type="NCBIfam" id="NF008413">
    <property type="entry name" value="PRK11239.1"/>
    <property type="match status" value="1"/>
</dbReference>
<dbReference type="PANTHER" id="PTHR38768">
    <property type="entry name" value="UPF0502 PROTEIN YCEH"/>
    <property type="match status" value="1"/>
</dbReference>
<dbReference type="PANTHER" id="PTHR38768:SF1">
    <property type="entry name" value="UPF0502 PROTEIN YCEH"/>
    <property type="match status" value="1"/>
</dbReference>
<dbReference type="Pfam" id="PF04337">
    <property type="entry name" value="DUF480"/>
    <property type="match status" value="1"/>
</dbReference>
<dbReference type="SUPFAM" id="SSF46785">
    <property type="entry name" value="Winged helix' DNA-binding domain"/>
    <property type="match status" value="2"/>
</dbReference>
<reference key="1">
    <citation type="journal article" date="2002" name="Proc. Natl. Acad. Sci. U.S.A.">
        <title>Extensive mosaic structure revealed by the complete genome sequence of uropathogenic Escherichia coli.</title>
        <authorList>
            <person name="Welch R.A."/>
            <person name="Burland V."/>
            <person name="Plunkett G. III"/>
            <person name="Redford P."/>
            <person name="Roesch P."/>
            <person name="Rasko D."/>
            <person name="Buckles E.L."/>
            <person name="Liou S.-R."/>
            <person name="Boutin A."/>
            <person name="Hackett J."/>
            <person name="Stroud D."/>
            <person name="Mayhew G.F."/>
            <person name="Rose D.J."/>
            <person name="Zhou S."/>
            <person name="Schwartz D.C."/>
            <person name="Perna N.T."/>
            <person name="Mobley H.L.T."/>
            <person name="Donnenberg M.S."/>
            <person name="Blattner F.R."/>
        </authorList>
    </citation>
    <scope>NUCLEOTIDE SEQUENCE [LARGE SCALE GENOMIC DNA]</scope>
    <source>
        <strain>CFT073 / ATCC 700928 / UPEC</strain>
    </source>
</reference>
<evidence type="ECO:0000255" key="1">
    <source>
        <dbReference type="HAMAP-Rule" id="MF_01584"/>
    </source>
</evidence>
<name>YCEH_ECOL6</name>
<gene>
    <name evidence="1" type="primary">yceH</name>
    <name type="ordered locus">c1334</name>
</gene>
<feature type="chain" id="PRO_0000309388" description="UPF0502 protein YceH">
    <location>
        <begin position="1"/>
        <end position="215"/>
    </location>
</feature>
<feature type="modified residue" description="N6-acetyllysine" evidence="1">
    <location>
        <position position="80"/>
    </location>
</feature>
<proteinExistence type="inferred from homology"/>
<accession>Q8FIR0</accession>
<protein>
    <recommendedName>
        <fullName evidence="1">UPF0502 protein YceH</fullName>
    </recommendedName>
</protein>
<comment type="similarity">
    <text evidence="1">Belongs to the UPF0502 family.</text>
</comment>
<keyword id="KW-0007">Acetylation</keyword>
<keyword id="KW-1185">Reference proteome</keyword>
<sequence length="215" mass="24180">MKYQLTALEARVIGCLLEKQVTTPEQYPLSVNGVVTACNQKTNREPVMNLSESEVQEQLDNLVKRHYLRTVSGFGNRVTKYEQRFCNSEFGDLKLSAAEVALITTLLLRGAQTPGELRSRAARMYEFSDMAEVESTLEQLANREDGPFVVRLAREPGKRESRYMHLFSGEVEDQPAVMDMSNAVDGDLQARVEALEIEVAELKQRLDSLLAHLGD</sequence>
<organism>
    <name type="scientific">Escherichia coli O6:H1 (strain CFT073 / ATCC 700928 / UPEC)</name>
    <dbReference type="NCBI Taxonomy" id="199310"/>
    <lineage>
        <taxon>Bacteria</taxon>
        <taxon>Pseudomonadati</taxon>
        <taxon>Pseudomonadota</taxon>
        <taxon>Gammaproteobacteria</taxon>
        <taxon>Enterobacterales</taxon>
        <taxon>Enterobacteriaceae</taxon>
        <taxon>Escherichia</taxon>
    </lineage>
</organism>